<protein>
    <recommendedName>
        <fullName>25S rRNA (cytosine(2870)-C(5))-methyltransferase</fullName>
        <ecNumber evidence="6">2.1.1.310</ecNumber>
    </recommendedName>
    <alternativeName>
        <fullName>Nucleolar protein 2</fullName>
    </alternativeName>
</protein>
<name>NOP2_YEAST</name>
<sequence>MGSRRHKNKQAAPPTLEEFQARKEKKANRKLEKGKRPSTTQGDEVSDRKKKKSKPFKKSRKEEEEVVEEDKDLPEVDLEELSKARKSLFDDEEDDDEAGLVDEELKDEFDLEQEYDYDEDEDNDAHPIFSDDDDEADLEELNAQNMEALSKKLDEEEAEEAEEAEMELVEAENMQPRADILPTEEQEEMMAQETPNLTSTRTRMIEIVKVLENFKTLGAEGRSRGEYVDRLLKDICEYFGYTPFLAEKLFNLFSPAEAMEFFEANEIARPITIRTNTLKTRRRDLAQTLVNRGVNLQPIGSWTKVGLQIFDSQVPIGATPEYLAGHYILQAASSFLPVIALDPHENERILDMAAAPGGKTTYISAMMKNTGCVFANDANKSRTKSLIANIHRLGCTNTIVCNYDAREFPKVIGGFDRILLDAPCSGTGVIGKDQSVKVSRTEKDFIQIPHLQKQLLLSAIDSVDCNSKHGGVIVYSTCSVAVEEDEAVIDYALRKRPNVKLVDTGLAIGKEAFTSYRGKKFHPSVKLARRYYPHTYNVDGFFVAKFQKIGPSSFDDNQASAKEKETAARKEALEEGIIHSDFATFEDEEDDKYIEKSVKNNLLKKGVNPKAKRPSNEK</sequence>
<proteinExistence type="evidence at protein level"/>
<accession>P40991</accession>
<accession>D6W1B9</accession>
<accession>E9P914</accession>
<organism>
    <name type="scientific">Saccharomyces cerevisiae (strain ATCC 204508 / S288c)</name>
    <name type="common">Baker's yeast</name>
    <dbReference type="NCBI Taxonomy" id="559292"/>
    <lineage>
        <taxon>Eukaryota</taxon>
        <taxon>Fungi</taxon>
        <taxon>Dikarya</taxon>
        <taxon>Ascomycota</taxon>
        <taxon>Saccharomycotina</taxon>
        <taxon>Saccharomycetes</taxon>
        <taxon>Saccharomycetales</taxon>
        <taxon>Saccharomycetaceae</taxon>
        <taxon>Saccharomyces</taxon>
    </lineage>
</organism>
<keyword id="KW-0002">3D-structure</keyword>
<keyword id="KW-0489">Methyltransferase</keyword>
<keyword id="KW-0539">Nucleus</keyword>
<keyword id="KW-0597">Phosphoprotein</keyword>
<keyword id="KW-1185">Reference proteome</keyword>
<keyword id="KW-0690">Ribosome biogenesis</keyword>
<keyword id="KW-0694">RNA-binding</keyword>
<keyword id="KW-0698">rRNA processing</keyword>
<keyword id="KW-0949">S-adenosyl-L-methionine</keyword>
<keyword id="KW-0808">Transferase</keyword>
<dbReference type="EC" id="2.1.1.310" evidence="6"/>
<dbReference type="EMBL" id="X82656">
    <property type="protein sequence ID" value="CAA57979.1"/>
    <property type="molecule type" value="Genomic_DNA"/>
</dbReference>
<dbReference type="EMBL" id="U12141">
    <property type="protein sequence ID" value="AAA99650.1"/>
    <property type="molecule type" value="Genomic_DNA"/>
</dbReference>
<dbReference type="EMBL" id="Z71337">
    <property type="protein sequence ID" value="CAA95934.1"/>
    <property type="molecule type" value="Genomic_DNA"/>
</dbReference>
<dbReference type="EMBL" id="AY693060">
    <property type="protein sequence ID" value="AAT93079.1"/>
    <property type="molecule type" value="Genomic_DNA"/>
</dbReference>
<dbReference type="EMBL" id="X83512">
    <property type="protein sequence ID" value="CAA58502.1"/>
    <property type="molecule type" value="Genomic_DNA"/>
</dbReference>
<dbReference type="EMBL" id="BK006947">
    <property type="protein sequence ID" value="DAA10485.1"/>
    <property type="molecule type" value="Genomic_DNA"/>
</dbReference>
<dbReference type="PIR" id="A55188">
    <property type="entry name" value="A55188"/>
</dbReference>
<dbReference type="RefSeq" id="NP_014338.3">
    <property type="nucleotide sequence ID" value="NM_001182899.3"/>
</dbReference>
<dbReference type="PDB" id="6ELZ">
    <property type="method" value="EM"/>
    <property type="resolution" value="3.30 A"/>
    <property type="chains" value="q=1-618"/>
</dbReference>
<dbReference type="PDB" id="6EM5">
    <property type="method" value="EM"/>
    <property type="resolution" value="4.30 A"/>
    <property type="chains" value="q=1-618"/>
</dbReference>
<dbReference type="PDB" id="7NAC">
    <property type="method" value="EM"/>
    <property type="resolution" value="3.04 A"/>
    <property type="chains" value="q=1-618"/>
</dbReference>
<dbReference type="PDB" id="7NAF">
    <property type="method" value="EM"/>
    <property type="resolution" value="3.13 A"/>
    <property type="chains" value="q=285-320"/>
</dbReference>
<dbReference type="PDB" id="7OHR">
    <property type="method" value="EM"/>
    <property type="resolution" value="4.72 A"/>
    <property type="chains" value="q=1-618"/>
</dbReference>
<dbReference type="PDB" id="7R6K">
    <property type="method" value="EM"/>
    <property type="resolution" value="3.17 A"/>
    <property type="chains" value="q=1-618"/>
</dbReference>
<dbReference type="PDB" id="7R7A">
    <property type="method" value="EM"/>
    <property type="resolution" value="3.04 A"/>
    <property type="chains" value="q=1-618"/>
</dbReference>
<dbReference type="PDB" id="7R7C">
    <property type="method" value="EM"/>
    <property type="resolution" value="3.71 A"/>
    <property type="chains" value="q=1-618"/>
</dbReference>
<dbReference type="PDB" id="8V83">
    <property type="method" value="EM"/>
    <property type="resolution" value="2.53 A"/>
    <property type="chains" value="q=1-618"/>
</dbReference>
<dbReference type="PDB" id="8V84">
    <property type="method" value="EM"/>
    <property type="resolution" value="2.70 A"/>
    <property type="chains" value="q=1-618"/>
</dbReference>
<dbReference type="PDB" id="8V87">
    <property type="method" value="EM"/>
    <property type="resolution" value="2.66 A"/>
    <property type="chains" value="q=1-618"/>
</dbReference>
<dbReference type="PDBsum" id="6ELZ"/>
<dbReference type="PDBsum" id="6EM5"/>
<dbReference type="PDBsum" id="7NAC"/>
<dbReference type="PDBsum" id="7NAF"/>
<dbReference type="PDBsum" id="7OHR"/>
<dbReference type="PDBsum" id="7R6K"/>
<dbReference type="PDBsum" id="7R7A"/>
<dbReference type="PDBsum" id="7R7C"/>
<dbReference type="PDBsum" id="8V83"/>
<dbReference type="PDBsum" id="8V84"/>
<dbReference type="PDBsum" id="8V87"/>
<dbReference type="EMDB" id="EMD-12906"/>
<dbReference type="EMDB" id="EMD-24269"/>
<dbReference type="EMDB" id="EMD-24271"/>
<dbReference type="EMDB" id="EMD-24280"/>
<dbReference type="EMDB" id="EMD-24296"/>
<dbReference type="EMDB" id="EMD-24297"/>
<dbReference type="EMDB" id="EMD-43017"/>
<dbReference type="EMDB" id="EMD-43021"/>
<dbReference type="EMDB" id="EMD-43027"/>
<dbReference type="SMR" id="P40991"/>
<dbReference type="BioGRID" id="35762">
    <property type="interactions" value="868"/>
</dbReference>
<dbReference type="DIP" id="DIP-6488N"/>
<dbReference type="FunCoup" id="P40991">
    <property type="interactions" value="951"/>
</dbReference>
<dbReference type="IntAct" id="P40991">
    <property type="interactions" value="111"/>
</dbReference>
<dbReference type="MINT" id="P40991"/>
<dbReference type="STRING" id="4932.YNL061W"/>
<dbReference type="GlyGen" id="P40991">
    <property type="glycosylation" value="1 site"/>
</dbReference>
<dbReference type="iPTMnet" id="P40991"/>
<dbReference type="PaxDb" id="4932-YNL061W"/>
<dbReference type="PeptideAtlas" id="P40991"/>
<dbReference type="DNASU" id="855664"/>
<dbReference type="EnsemblFungi" id="YNL061W_mRNA">
    <property type="protein sequence ID" value="YNL061W"/>
    <property type="gene ID" value="YNL061W"/>
</dbReference>
<dbReference type="GeneID" id="855664"/>
<dbReference type="KEGG" id="sce:YNL061W"/>
<dbReference type="AGR" id="SGD:S000005005"/>
<dbReference type="SGD" id="S000005005">
    <property type="gene designation" value="NOP2"/>
</dbReference>
<dbReference type="VEuPathDB" id="FungiDB:YNL061W"/>
<dbReference type="eggNOG" id="KOG1122">
    <property type="taxonomic scope" value="Eukaryota"/>
</dbReference>
<dbReference type="GeneTree" id="ENSGT00940000161554"/>
<dbReference type="HOGENOM" id="CLU_005316_3_2_1"/>
<dbReference type="InParanoid" id="P40991"/>
<dbReference type="OMA" id="PIGSWTK"/>
<dbReference type="OrthoDB" id="427002at2759"/>
<dbReference type="BioCyc" id="MetaCyc:G3O-33091-MONOMER"/>
<dbReference type="BioCyc" id="YEAST:G3O-33091-MONOMER"/>
<dbReference type="BRENDA" id="2.1.1.310">
    <property type="organism ID" value="984"/>
</dbReference>
<dbReference type="BioGRID-ORCS" id="855664">
    <property type="hits" value="1 hit in 10 CRISPR screens"/>
</dbReference>
<dbReference type="CD-CODE" id="BDAE0F88">
    <property type="entry name" value="Nucleolus"/>
</dbReference>
<dbReference type="PRO" id="PR:P40991"/>
<dbReference type="Proteomes" id="UP000002311">
    <property type="component" value="Chromosome XIV"/>
</dbReference>
<dbReference type="RNAct" id="P40991">
    <property type="molecule type" value="protein"/>
</dbReference>
<dbReference type="GO" id="GO:0005730">
    <property type="term" value="C:nucleolus"/>
    <property type="evidence" value="ECO:0000314"/>
    <property type="project" value="SGD"/>
</dbReference>
<dbReference type="GO" id="GO:0005654">
    <property type="term" value="C:nucleoplasm"/>
    <property type="evidence" value="ECO:0000304"/>
    <property type="project" value="Reactome"/>
</dbReference>
<dbReference type="GO" id="GO:0005634">
    <property type="term" value="C:nucleus"/>
    <property type="evidence" value="ECO:0007005"/>
    <property type="project" value="SGD"/>
</dbReference>
<dbReference type="GO" id="GO:0030687">
    <property type="term" value="C:preribosome, large subunit precursor"/>
    <property type="evidence" value="ECO:0000314"/>
    <property type="project" value="SGD"/>
</dbReference>
<dbReference type="GO" id="GO:0003723">
    <property type="term" value="F:RNA binding"/>
    <property type="evidence" value="ECO:0007669"/>
    <property type="project" value="UniProtKB-KW"/>
</dbReference>
<dbReference type="GO" id="GO:0009383">
    <property type="term" value="F:rRNA (cytosine-C5-)-methyltransferase activity"/>
    <property type="evidence" value="ECO:0000314"/>
    <property type="project" value="SGD"/>
</dbReference>
<dbReference type="GO" id="GO:1902626">
    <property type="term" value="P:assembly of large subunit precursor of preribosome"/>
    <property type="evidence" value="ECO:0000315"/>
    <property type="project" value="SGD"/>
</dbReference>
<dbReference type="GO" id="GO:0000470">
    <property type="term" value="P:maturation of LSU-rRNA"/>
    <property type="evidence" value="ECO:0000318"/>
    <property type="project" value="GO_Central"/>
</dbReference>
<dbReference type="GO" id="GO:0000463">
    <property type="term" value="P:maturation of LSU-rRNA from tricistronic rRNA transcript (SSU-rRNA, 5.8S rRNA, LSU-rRNA)"/>
    <property type="evidence" value="ECO:0000315"/>
    <property type="project" value="SGD"/>
</dbReference>
<dbReference type="GO" id="GO:0042273">
    <property type="term" value="P:ribosomal large subunit biogenesis"/>
    <property type="evidence" value="ECO:0000315"/>
    <property type="project" value="SGD"/>
</dbReference>
<dbReference type="GO" id="GO:0070475">
    <property type="term" value="P:rRNA base methylation"/>
    <property type="evidence" value="ECO:0000314"/>
    <property type="project" value="SGD"/>
</dbReference>
<dbReference type="GO" id="GO:0031167">
    <property type="term" value="P:rRNA methylation"/>
    <property type="evidence" value="ECO:0000304"/>
    <property type="project" value="Reactome"/>
</dbReference>
<dbReference type="CDD" id="cd02440">
    <property type="entry name" value="AdoMet_MTases"/>
    <property type="match status" value="1"/>
</dbReference>
<dbReference type="FunFam" id="3.40.50.150:FF:000192">
    <property type="entry name" value="NOP2p rRNA m5C methyltransferase"/>
    <property type="match status" value="1"/>
</dbReference>
<dbReference type="FunFam" id="3.30.70.1170:FF:000001">
    <property type="entry name" value="Ribosomal RNA methyltransferase Nop2"/>
    <property type="match status" value="1"/>
</dbReference>
<dbReference type="Gene3D" id="3.30.70.1170">
    <property type="entry name" value="Sun protein, domain 3"/>
    <property type="match status" value="1"/>
</dbReference>
<dbReference type="Gene3D" id="3.40.50.150">
    <property type="entry name" value="Vaccinia Virus protein VP39"/>
    <property type="match status" value="1"/>
</dbReference>
<dbReference type="InterPro" id="IPR049560">
    <property type="entry name" value="MeTrfase_RsmB-F_NOP2_cat"/>
</dbReference>
<dbReference type="InterPro" id="IPR001678">
    <property type="entry name" value="MeTrfase_RsmB-F_NOP2_dom"/>
</dbReference>
<dbReference type="InterPro" id="IPR011023">
    <property type="entry name" value="Nop2p"/>
</dbReference>
<dbReference type="InterPro" id="IPR023267">
    <property type="entry name" value="RCMT"/>
</dbReference>
<dbReference type="InterPro" id="IPR023273">
    <property type="entry name" value="RCMT_NOP2"/>
</dbReference>
<dbReference type="InterPro" id="IPR018314">
    <property type="entry name" value="RsmB/NOL1/NOP2-like_CS"/>
</dbReference>
<dbReference type="InterPro" id="IPR029063">
    <property type="entry name" value="SAM-dependent_MTases_sf"/>
</dbReference>
<dbReference type="NCBIfam" id="TIGR00446">
    <property type="entry name" value="nop2p"/>
    <property type="match status" value="1"/>
</dbReference>
<dbReference type="PANTHER" id="PTHR22807:SF30">
    <property type="entry name" value="28S RRNA (CYTOSINE(4447)-C(5))-METHYLTRANSFERASE-RELATED"/>
    <property type="match status" value="1"/>
</dbReference>
<dbReference type="PANTHER" id="PTHR22807">
    <property type="entry name" value="NOP2 YEAST -RELATED NOL1/NOP2/FMU SUN DOMAIN-CONTAINING"/>
    <property type="match status" value="1"/>
</dbReference>
<dbReference type="Pfam" id="PF01189">
    <property type="entry name" value="Methyltr_RsmB-F"/>
    <property type="match status" value="1"/>
</dbReference>
<dbReference type="PRINTS" id="PR02008">
    <property type="entry name" value="RCMTFAMILY"/>
</dbReference>
<dbReference type="PRINTS" id="PR02012">
    <property type="entry name" value="RCMTNOP2"/>
</dbReference>
<dbReference type="SUPFAM" id="SSF53335">
    <property type="entry name" value="S-adenosyl-L-methionine-dependent methyltransferases"/>
    <property type="match status" value="1"/>
</dbReference>
<dbReference type="PROSITE" id="PS01153">
    <property type="entry name" value="NOL1_NOP2_SUN"/>
    <property type="match status" value="1"/>
</dbReference>
<dbReference type="PROSITE" id="PS51686">
    <property type="entry name" value="SAM_MT_RSMB_NOP"/>
    <property type="match status" value="1"/>
</dbReference>
<gene>
    <name type="primary">NOP2</name>
    <name type="synonym">YNA1</name>
    <name type="ordered locus">YNL061W</name>
    <name type="ORF">N2428</name>
    <name type="ORF">YNL2428W</name>
</gene>
<feature type="chain" id="PRO_0000211819" description="25S rRNA (cytosine(2870)-C(5))-methyltransferase">
    <location>
        <begin position="1"/>
        <end position="618"/>
    </location>
</feature>
<feature type="region of interest" description="Disordered" evidence="2">
    <location>
        <begin position="1"/>
        <end position="132"/>
    </location>
</feature>
<feature type="compositionally biased region" description="Basic residues" evidence="2">
    <location>
        <begin position="48"/>
        <end position="59"/>
    </location>
</feature>
<feature type="compositionally biased region" description="Acidic residues" evidence="2">
    <location>
        <begin position="64"/>
        <end position="79"/>
    </location>
</feature>
<feature type="compositionally biased region" description="Basic and acidic residues" evidence="2">
    <location>
        <begin position="80"/>
        <end position="89"/>
    </location>
</feature>
<feature type="compositionally biased region" description="Acidic residues" evidence="2">
    <location>
        <begin position="90"/>
        <end position="123"/>
    </location>
</feature>
<feature type="active site" description="Nucleophile" evidence="1">
    <location>
        <position position="478"/>
    </location>
</feature>
<feature type="binding site" evidence="1">
    <location>
        <begin position="353"/>
        <end position="359"/>
    </location>
    <ligand>
        <name>S-adenosyl-L-methionine</name>
        <dbReference type="ChEBI" id="CHEBI:59789"/>
    </ligand>
</feature>
<feature type="binding site" evidence="1">
    <location>
        <position position="377"/>
    </location>
    <ligand>
        <name>S-adenosyl-L-methionine</name>
        <dbReference type="ChEBI" id="CHEBI:59789"/>
    </ligand>
</feature>
<feature type="binding site" evidence="1">
    <location>
        <position position="404"/>
    </location>
    <ligand>
        <name>S-adenosyl-L-methionine</name>
        <dbReference type="ChEBI" id="CHEBI:59789"/>
    </ligand>
</feature>
<feature type="binding site" evidence="1">
    <location>
        <position position="421"/>
    </location>
    <ligand>
        <name>S-adenosyl-L-methionine</name>
        <dbReference type="ChEBI" id="CHEBI:59789"/>
    </ligand>
</feature>
<feature type="modified residue" description="Phosphoserine" evidence="9">
    <location>
        <position position="580"/>
    </location>
</feature>
<feature type="mutagenesis site" description="Cannot complement loss of wild type NOP2." evidence="6 7">
    <original>C</original>
    <variation>A</variation>
    <variation>S</variation>
    <location>
        <position position="424"/>
    </location>
</feature>
<feature type="mutagenesis site" description="Fails to ctalyze the C-5 methylation of the C2870 residue and strongly affects 60S biogenesis." evidence="6 7">
    <original>C</original>
    <variation>A</variation>
    <location>
        <position position="478"/>
    </location>
</feature>
<feature type="sequence conflict" description="In Ref. 6; AAT93079." evidence="8" ref="6">
    <original>T</original>
    <variation>A</variation>
    <location>
        <position position="216"/>
    </location>
</feature>
<feature type="sequence conflict" description="In Ref. 7; CAA58502." evidence="8" ref="7">
    <original>I</original>
    <variation>M</variation>
    <location>
        <position position="577"/>
    </location>
</feature>
<feature type="strand" evidence="11">
    <location>
        <begin position="272"/>
        <end position="275"/>
    </location>
</feature>
<feature type="turn" evidence="11">
    <location>
        <begin position="277"/>
        <end position="279"/>
    </location>
</feature>
<feature type="helix" evidence="10">
    <location>
        <begin position="286"/>
        <end position="292"/>
    </location>
</feature>
<feature type="strand" evidence="10">
    <location>
        <begin position="294"/>
        <end position="297"/>
    </location>
</feature>
<feature type="turn" evidence="11">
    <location>
        <begin position="300"/>
        <end position="302"/>
    </location>
</feature>
<feature type="strand" evidence="10">
    <location>
        <begin position="308"/>
        <end position="314"/>
    </location>
</feature>
<feature type="strand" evidence="10">
    <location>
        <begin position="316"/>
        <end position="318"/>
    </location>
</feature>
<feature type="helix" evidence="11">
    <location>
        <begin position="320"/>
        <end position="323"/>
    </location>
</feature>
<feature type="strand" evidence="11">
    <location>
        <begin position="326"/>
        <end position="329"/>
    </location>
</feature>
<feature type="helix" evidence="11">
    <location>
        <begin position="332"/>
        <end position="334"/>
    </location>
</feature>
<feature type="helix" evidence="11">
    <location>
        <begin position="335"/>
        <end position="341"/>
    </location>
</feature>
<feature type="helix" evidence="11">
    <location>
        <begin position="360"/>
        <end position="367"/>
    </location>
</feature>
<feature type="strand" evidence="11">
    <location>
        <begin position="371"/>
        <end position="376"/>
    </location>
</feature>
<feature type="helix" evidence="11">
    <location>
        <begin position="380"/>
        <end position="382"/>
    </location>
</feature>
<feature type="helix" evidence="11">
    <location>
        <begin position="383"/>
        <end position="392"/>
    </location>
</feature>
<feature type="strand" evidence="11">
    <location>
        <begin position="397"/>
        <end position="401"/>
    </location>
</feature>
<feature type="helix" evidence="11">
    <location>
        <begin position="405"/>
        <end position="407"/>
    </location>
</feature>
<feature type="strand" evidence="11">
    <location>
        <begin position="409"/>
        <end position="412"/>
    </location>
</feature>
<feature type="strand" evidence="11">
    <location>
        <begin position="415"/>
        <end position="420"/>
    </location>
</feature>
<feature type="helix" evidence="11">
    <location>
        <begin position="455"/>
        <end position="461"/>
    </location>
</feature>
<feature type="strand" evidence="11">
    <location>
        <begin position="472"/>
        <end position="475"/>
    </location>
</feature>
<reference key="1">
    <citation type="journal article" date="1994" name="J. Cell Biol.">
        <title>Yeast NOP2 encodes an essential nucleolar protein with homology to a human proliferation marker.</title>
        <authorList>
            <person name="de Beus E."/>
            <person name="Brockenbrough J.S."/>
            <person name="Hong B."/>
            <person name="Aris J.P."/>
        </authorList>
    </citation>
    <scope>NUCLEOTIDE SEQUENCE [GENOMIC DNA]</scope>
    <source>
        <strain>BJ2168</strain>
    </source>
</reference>
<reference key="2">
    <citation type="journal article" date="1995" name="Yeast">
        <title>The sequence of a 44 420 bp fragment located on the left arm of chromosome XIV from Saccharomyces cerevisiae.</title>
        <authorList>
            <person name="Bergez P."/>
            <person name="Doignon F."/>
            <person name="Crouzet M."/>
        </authorList>
    </citation>
    <scope>NUCLEOTIDE SEQUENCE [GENOMIC DNA]</scope>
    <source>
        <strain>S288c / FY1676</strain>
    </source>
</reference>
<reference key="3">
    <citation type="journal article" date="1996" name="Yeast">
        <authorList>
            <person name="Bergez P."/>
            <person name="Doignon F."/>
            <person name="Crouzet M."/>
        </authorList>
    </citation>
    <scope>ERRATUM OF PUBMED:8533472</scope>
</reference>
<reference key="4">
    <citation type="journal article" date="1997" name="Nature">
        <title>The nucleotide sequence of Saccharomyces cerevisiae chromosome XIV and its evolutionary implications.</title>
        <authorList>
            <person name="Philippsen P."/>
            <person name="Kleine K."/>
            <person name="Poehlmann R."/>
            <person name="Duesterhoeft A."/>
            <person name="Hamberg K."/>
            <person name="Hegemann J.H."/>
            <person name="Obermaier B."/>
            <person name="Urrestarazu L.A."/>
            <person name="Aert R."/>
            <person name="Albermann K."/>
            <person name="Altmann R."/>
            <person name="Andre B."/>
            <person name="Baladron V."/>
            <person name="Ballesta J.P.G."/>
            <person name="Becam A.-M."/>
            <person name="Beinhauer J.D."/>
            <person name="Boskovic J."/>
            <person name="Buitrago M.J."/>
            <person name="Bussereau F."/>
            <person name="Coster F."/>
            <person name="Crouzet M."/>
            <person name="D'Angelo M."/>
            <person name="Dal Pero F."/>
            <person name="De Antoni A."/>
            <person name="del Rey F."/>
            <person name="Doignon F."/>
            <person name="Domdey H."/>
            <person name="Dubois E."/>
            <person name="Fiedler T.A."/>
            <person name="Fleig U."/>
            <person name="Floeth M."/>
            <person name="Fritz C."/>
            <person name="Gaillardin C."/>
            <person name="Garcia-Cantalejo J.M."/>
            <person name="Glansdorff N."/>
            <person name="Goffeau A."/>
            <person name="Gueldener U."/>
            <person name="Herbert C.J."/>
            <person name="Heumann K."/>
            <person name="Heuss-Neitzel D."/>
            <person name="Hilbert H."/>
            <person name="Hinni K."/>
            <person name="Iraqui Houssaini I."/>
            <person name="Jacquet M."/>
            <person name="Jimenez A."/>
            <person name="Jonniaux J.-L."/>
            <person name="Karpfinger-Hartl L."/>
            <person name="Lanfranchi G."/>
            <person name="Lepingle A."/>
            <person name="Levesque H."/>
            <person name="Lyck R."/>
            <person name="Maftahi M."/>
            <person name="Mallet L."/>
            <person name="Maurer C.T.C."/>
            <person name="Messenguy F."/>
            <person name="Mewes H.-W."/>
            <person name="Moestl D."/>
            <person name="Nasr F."/>
            <person name="Nicaud J.-M."/>
            <person name="Niedenthal R.K."/>
            <person name="Pandolfo D."/>
            <person name="Pierard A."/>
            <person name="Piravandi E."/>
            <person name="Planta R.J."/>
            <person name="Pohl T.M."/>
            <person name="Purnelle B."/>
            <person name="Rebischung C."/>
            <person name="Remacha M.A."/>
            <person name="Revuelta J.L."/>
            <person name="Rinke M."/>
            <person name="Saiz J.E."/>
            <person name="Sartorello F."/>
            <person name="Scherens B."/>
            <person name="Sen-Gupta M."/>
            <person name="Soler-Mira A."/>
            <person name="Urbanus J.H.M."/>
            <person name="Valle G."/>
            <person name="Van Dyck L."/>
            <person name="Verhasselt P."/>
            <person name="Vierendeels F."/>
            <person name="Vissers S."/>
            <person name="Voet M."/>
            <person name="Volckaert G."/>
            <person name="Wach A."/>
            <person name="Wambutt R."/>
            <person name="Wedler H."/>
            <person name="Zollner A."/>
            <person name="Hani J."/>
        </authorList>
    </citation>
    <scope>NUCLEOTIDE SEQUENCE [LARGE SCALE GENOMIC DNA]</scope>
    <source>
        <strain>ATCC 204508 / S288c</strain>
    </source>
</reference>
<reference key="5">
    <citation type="journal article" date="2014" name="G3 (Bethesda)">
        <title>The reference genome sequence of Saccharomyces cerevisiae: Then and now.</title>
        <authorList>
            <person name="Engel S.R."/>
            <person name="Dietrich F.S."/>
            <person name="Fisk D.G."/>
            <person name="Binkley G."/>
            <person name="Balakrishnan R."/>
            <person name="Costanzo M.C."/>
            <person name="Dwight S.S."/>
            <person name="Hitz B.C."/>
            <person name="Karra K."/>
            <person name="Nash R.S."/>
            <person name="Weng S."/>
            <person name="Wong E.D."/>
            <person name="Lloyd P."/>
            <person name="Skrzypek M.S."/>
            <person name="Miyasato S.R."/>
            <person name="Simison M."/>
            <person name="Cherry J.M."/>
        </authorList>
    </citation>
    <scope>GENOME REANNOTATION</scope>
    <source>
        <strain>ATCC 204508 / S288c</strain>
    </source>
</reference>
<reference key="6">
    <citation type="journal article" date="2007" name="Genome Res.">
        <title>Approaching a complete repository of sequence-verified protein-encoding clones for Saccharomyces cerevisiae.</title>
        <authorList>
            <person name="Hu Y."/>
            <person name="Rolfs A."/>
            <person name="Bhullar B."/>
            <person name="Murthy T.V.S."/>
            <person name="Zhu C."/>
            <person name="Berger M.F."/>
            <person name="Camargo A.A."/>
            <person name="Kelley F."/>
            <person name="McCarron S."/>
            <person name="Jepson D."/>
            <person name="Richardson A."/>
            <person name="Raphael J."/>
            <person name="Moreira D."/>
            <person name="Taycher E."/>
            <person name="Zuo D."/>
            <person name="Mohr S."/>
            <person name="Kane M.F."/>
            <person name="Williamson J."/>
            <person name="Simpson A.J.G."/>
            <person name="Bulyk M.L."/>
            <person name="Harlow E."/>
            <person name="Marsischky G."/>
            <person name="Kolodner R.D."/>
            <person name="LaBaer J."/>
        </authorList>
    </citation>
    <scope>NUCLEOTIDE SEQUENCE [GENOMIC DNA]</scope>
    <source>
        <strain>ATCC 204508 / S288c</strain>
    </source>
</reference>
<reference key="7">
    <citation type="submission" date="1994-12" db="EMBL/GenBank/DDBJ databases">
        <authorList>
            <person name="Garcia-Barrio M.T."/>
            <person name="Cuesta R."/>
            <person name="Hinnebusch A.G."/>
            <person name="Tamame Gonzalez M."/>
        </authorList>
    </citation>
    <scope>NUCLEOTIDE SEQUENCE [GENOMIC DNA] OF 146-618</scope>
    <source>
        <strain>ATCC 204508 / S288c</strain>
    </source>
</reference>
<reference key="8">
    <citation type="journal article" date="1999" name="Biochem. J.">
        <title>A conserved motif in the yeast nucleolar protein Nop2p contains an essential cysteine residue.</title>
        <authorList>
            <person name="King M."/>
            <person name="Ton D."/>
            <person name="Redman K.L."/>
        </authorList>
    </citation>
    <scope>MUTAGENESIS OF CYS-424 AND CYS-478</scope>
    <scope>FUNCTION</scope>
</reference>
<reference key="9">
    <citation type="journal article" date="2003" name="Nature">
        <title>Global analysis of protein expression in yeast.</title>
        <authorList>
            <person name="Ghaemmaghami S."/>
            <person name="Huh W.-K."/>
            <person name="Bower K."/>
            <person name="Howson R.W."/>
            <person name="Belle A."/>
            <person name="Dephoure N."/>
            <person name="O'Shea E.K."/>
            <person name="Weissman J.S."/>
        </authorList>
    </citation>
    <scope>LEVEL OF PROTEIN EXPRESSION [LARGE SCALE ANALYSIS]</scope>
</reference>
<reference key="10">
    <citation type="journal article" date="2005" name="Biochem. J.">
        <title>Nop53p is a novel nucleolar 60S ribosomal subunit biogenesis protein.</title>
        <authorList>
            <person name="Sydorskyy Y."/>
            <person name="Dilworth D.J."/>
            <person name="Halloran B."/>
            <person name="Yi E.C."/>
            <person name="Makhnevych T."/>
            <person name="Wozniak R.W."/>
            <person name="Aitchison J.D."/>
        </authorList>
    </citation>
    <scope>INTERACTION WITH NOP53</scope>
    <scope>IDENTIFICATION BY MASS SPECTROMETRY</scope>
</reference>
<reference key="11">
    <citation type="journal article" date="2007" name="J. Proteome Res.">
        <title>Large-scale phosphorylation analysis of alpha-factor-arrested Saccharomyces cerevisiae.</title>
        <authorList>
            <person name="Li X."/>
            <person name="Gerber S.A."/>
            <person name="Rudner A.D."/>
            <person name="Beausoleil S.A."/>
            <person name="Haas W."/>
            <person name="Villen J."/>
            <person name="Elias J.E."/>
            <person name="Gygi S.P."/>
        </authorList>
    </citation>
    <scope>PHOSPHORYLATION [LARGE SCALE ANALYSIS] AT SER-580</scope>
    <scope>IDENTIFICATION BY MASS SPECTROMETRY [LARGE SCALE ANALYSIS]</scope>
    <source>
        <strain>ADR376</strain>
    </source>
</reference>
<reference key="12">
    <citation type="journal article" date="2009" name="Science">
        <title>Global analysis of Cdk1 substrate phosphorylation sites provides insights into evolution.</title>
        <authorList>
            <person name="Holt L.J."/>
            <person name="Tuch B.B."/>
            <person name="Villen J."/>
            <person name="Johnson A.D."/>
            <person name="Gygi S.P."/>
            <person name="Morgan D.O."/>
        </authorList>
    </citation>
    <scope>IDENTIFICATION BY MASS SPECTROMETRY [LARGE SCALE ANALYSIS]</scope>
</reference>
<reference key="13">
    <citation type="journal article" date="2012" name="Mol. Biol. Cell">
        <title>The methyltransferase adaptor protein Trm112 is involved in biogenesis of both ribosomal subunits.</title>
        <authorList>
            <person name="Sardana R."/>
            <person name="Johnson A.W."/>
        </authorList>
    </citation>
    <scope>INTERACTION WITH TRM112</scope>
</reference>
<reference key="14">
    <citation type="journal article" date="2013" name="Nucleic Acids Res.">
        <title>Yeast Nop2 and Rcm1 methylate C2870 and C2278 of the 25S rRNA, respectively.</title>
        <authorList>
            <person name="Sharma S."/>
            <person name="Yang J."/>
            <person name="Watzinger P."/>
            <person name="Kotter P."/>
            <person name="Entian K.D."/>
        </authorList>
    </citation>
    <scope>FUNCTION</scope>
    <scope>CATALYTIC ACTIVITY</scope>
    <scope>MUTAGENESIS OF CYS-424 AND CYS-478</scope>
</reference>
<comment type="function">
    <text evidence="6 7">S-adenosyl-L-methionine-dependent methyltransferase that specifically methylates the C(5) position of cytosine 2870 (m5C2870) in 25S rRNA. Required for 60S ribosomal subunit synthesis and processing.</text>
</comment>
<comment type="catalytic activity">
    <reaction evidence="6">
        <text>cytidine(2870) in 25S rRNA + S-adenosyl-L-methionine = 5-methylcytidine(2870) in 25S rRNA + S-adenosyl-L-homocysteine + H(+)</text>
        <dbReference type="Rhea" id="RHEA:43176"/>
        <dbReference type="Rhea" id="RHEA-COMP:10389"/>
        <dbReference type="Rhea" id="RHEA-COMP:10390"/>
        <dbReference type="ChEBI" id="CHEBI:15378"/>
        <dbReference type="ChEBI" id="CHEBI:57856"/>
        <dbReference type="ChEBI" id="CHEBI:59789"/>
        <dbReference type="ChEBI" id="CHEBI:74483"/>
        <dbReference type="ChEBI" id="CHEBI:82748"/>
        <dbReference type="EC" id="2.1.1.310"/>
    </reaction>
</comment>
<comment type="subunit">
    <text evidence="4 5">Interacts with NOP53. Interacts with TRM112.</text>
</comment>
<comment type="interaction">
    <interactant intactId="EBI-12110">
        <id>P40991</id>
    </interactant>
    <interactant intactId="EBI-12105">
        <id>Q02892</id>
        <label>NOG1</label>
    </interactant>
    <organismsDiffer>false</organismsDiffer>
    <experiments>3</experiments>
</comment>
<comment type="subcellular location">
    <subcellularLocation>
        <location>Nucleus</location>
        <location>Nucleolus</location>
    </subcellularLocation>
</comment>
<comment type="miscellaneous">
    <text evidence="3">Present with 18700 molecules/cell in log phase SD medium.</text>
</comment>
<comment type="similarity">
    <text evidence="1">Belongs to the class I-like SAM-binding methyltransferase superfamily. RsmB/NOP family.</text>
</comment>
<evidence type="ECO:0000255" key="1">
    <source>
        <dbReference type="PROSITE-ProRule" id="PRU01023"/>
    </source>
</evidence>
<evidence type="ECO:0000256" key="2">
    <source>
        <dbReference type="SAM" id="MobiDB-lite"/>
    </source>
</evidence>
<evidence type="ECO:0000269" key="3">
    <source>
    </source>
</evidence>
<evidence type="ECO:0000269" key="4">
    <source>
    </source>
</evidence>
<evidence type="ECO:0000269" key="5">
    <source>
    </source>
</evidence>
<evidence type="ECO:0000269" key="6">
    <source>
    </source>
</evidence>
<evidence type="ECO:0000269" key="7">
    <source>
    </source>
</evidence>
<evidence type="ECO:0000305" key="8"/>
<evidence type="ECO:0007744" key="9">
    <source>
    </source>
</evidence>
<evidence type="ECO:0007829" key="10">
    <source>
        <dbReference type="PDB" id="7NAF"/>
    </source>
</evidence>
<evidence type="ECO:0007829" key="11">
    <source>
        <dbReference type="PDB" id="7R6K"/>
    </source>
</evidence>